<gene>
    <name evidence="1" type="primary">pyrB</name>
    <name type="ordered locus">XCC2746</name>
</gene>
<dbReference type="EC" id="2.1.3.2" evidence="1"/>
<dbReference type="EMBL" id="AE008922">
    <property type="protein sequence ID" value="AAM42018.1"/>
    <property type="molecule type" value="Genomic_DNA"/>
</dbReference>
<dbReference type="RefSeq" id="NP_638094.1">
    <property type="nucleotide sequence ID" value="NC_003902.1"/>
</dbReference>
<dbReference type="RefSeq" id="WP_011037876.1">
    <property type="nucleotide sequence ID" value="NC_003902.1"/>
</dbReference>
<dbReference type="SMR" id="Q8P767"/>
<dbReference type="STRING" id="190485.XCC2746"/>
<dbReference type="EnsemblBacteria" id="AAM42018">
    <property type="protein sequence ID" value="AAM42018"/>
    <property type="gene ID" value="XCC2746"/>
</dbReference>
<dbReference type="KEGG" id="xcc:XCC2746"/>
<dbReference type="PATRIC" id="fig|190485.4.peg.2932"/>
<dbReference type="eggNOG" id="COG0540">
    <property type="taxonomic scope" value="Bacteria"/>
</dbReference>
<dbReference type="HOGENOM" id="CLU_043846_2_0_6"/>
<dbReference type="OrthoDB" id="9774690at2"/>
<dbReference type="UniPathway" id="UPA00070">
    <property type="reaction ID" value="UER00116"/>
</dbReference>
<dbReference type="Proteomes" id="UP000001010">
    <property type="component" value="Chromosome"/>
</dbReference>
<dbReference type="GO" id="GO:0016597">
    <property type="term" value="F:amino acid binding"/>
    <property type="evidence" value="ECO:0007669"/>
    <property type="project" value="InterPro"/>
</dbReference>
<dbReference type="GO" id="GO:0004070">
    <property type="term" value="F:aspartate carbamoyltransferase activity"/>
    <property type="evidence" value="ECO:0007669"/>
    <property type="project" value="UniProtKB-UniRule"/>
</dbReference>
<dbReference type="GO" id="GO:0006207">
    <property type="term" value="P:'de novo' pyrimidine nucleobase biosynthetic process"/>
    <property type="evidence" value="ECO:0007669"/>
    <property type="project" value="InterPro"/>
</dbReference>
<dbReference type="GO" id="GO:0044205">
    <property type="term" value="P:'de novo' UMP biosynthetic process"/>
    <property type="evidence" value="ECO:0007669"/>
    <property type="project" value="UniProtKB-UniRule"/>
</dbReference>
<dbReference type="GO" id="GO:0006520">
    <property type="term" value="P:amino acid metabolic process"/>
    <property type="evidence" value="ECO:0007669"/>
    <property type="project" value="InterPro"/>
</dbReference>
<dbReference type="FunFam" id="3.40.50.1370:FF:000007">
    <property type="entry name" value="Aspartate carbamoyltransferase"/>
    <property type="match status" value="1"/>
</dbReference>
<dbReference type="FunFam" id="3.40.50.1370:FF:000019">
    <property type="entry name" value="Aspartate carbamoyltransferase"/>
    <property type="match status" value="1"/>
</dbReference>
<dbReference type="Gene3D" id="3.40.50.1370">
    <property type="entry name" value="Aspartate/ornithine carbamoyltransferase"/>
    <property type="match status" value="2"/>
</dbReference>
<dbReference type="HAMAP" id="MF_00001">
    <property type="entry name" value="Asp_carb_tr"/>
    <property type="match status" value="1"/>
</dbReference>
<dbReference type="InterPro" id="IPR006132">
    <property type="entry name" value="Asp/Orn_carbamoyltranf_P-bd"/>
</dbReference>
<dbReference type="InterPro" id="IPR006130">
    <property type="entry name" value="Asp/Orn_carbamoylTrfase"/>
</dbReference>
<dbReference type="InterPro" id="IPR036901">
    <property type="entry name" value="Asp/Orn_carbamoylTrfase_sf"/>
</dbReference>
<dbReference type="InterPro" id="IPR002082">
    <property type="entry name" value="Asp_carbamoyltransf"/>
</dbReference>
<dbReference type="InterPro" id="IPR006131">
    <property type="entry name" value="Asp_carbamoyltransf_Asp/Orn-bd"/>
</dbReference>
<dbReference type="NCBIfam" id="TIGR00670">
    <property type="entry name" value="asp_carb_tr"/>
    <property type="match status" value="1"/>
</dbReference>
<dbReference type="NCBIfam" id="NF002032">
    <property type="entry name" value="PRK00856.1"/>
    <property type="match status" value="1"/>
</dbReference>
<dbReference type="PANTHER" id="PTHR45753:SF6">
    <property type="entry name" value="ASPARTATE CARBAMOYLTRANSFERASE"/>
    <property type="match status" value="1"/>
</dbReference>
<dbReference type="PANTHER" id="PTHR45753">
    <property type="entry name" value="ORNITHINE CARBAMOYLTRANSFERASE, MITOCHONDRIAL"/>
    <property type="match status" value="1"/>
</dbReference>
<dbReference type="Pfam" id="PF00185">
    <property type="entry name" value="OTCace"/>
    <property type="match status" value="1"/>
</dbReference>
<dbReference type="Pfam" id="PF02729">
    <property type="entry name" value="OTCace_N"/>
    <property type="match status" value="1"/>
</dbReference>
<dbReference type="PRINTS" id="PR00100">
    <property type="entry name" value="AOTCASE"/>
</dbReference>
<dbReference type="PRINTS" id="PR00101">
    <property type="entry name" value="ATCASE"/>
</dbReference>
<dbReference type="SUPFAM" id="SSF53671">
    <property type="entry name" value="Aspartate/ornithine carbamoyltransferase"/>
    <property type="match status" value="1"/>
</dbReference>
<dbReference type="PROSITE" id="PS00097">
    <property type="entry name" value="CARBAMOYLTRANSFERASE"/>
    <property type="match status" value="1"/>
</dbReference>
<accession>Q8P767</accession>
<proteinExistence type="inferred from homology"/>
<evidence type="ECO:0000255" key="1">
    <source>
        <dbReference type="HAMAP-Rule" id="MF_00001"/>
    </source>
</evidence>
<name>PYRB_XANCP</name>
<reference key="1">
    <citation type="journal article" date="2002" name="Nature">
        <title>Comparison of the genomes of two Xanthomonas pathogens with differing host specificities.</title>
        <authorList>
            <person name="da Silva A.C.R."/>
            <person name="Ferro J.A."/>
            <person name="Reinach F.C."/>
            <person name="Farah C.S."/>
            <person name="Furlan L.R."/>
            <person name="Quaggio R.B."/>
            <person name="Monteiro-Vitorello C.B."/>
            <person name="Van Sluys M.A."/>
            <person name="Almeida N.F. Jr."/>
            <person name="Alves L.M.C."/>
            <person name="do Amaral A.M."/>
            <person name="Bertolini M.C."/>
            <person name="Camargo L.E.A."/>
            <person name="Camarotte G."/>
            <person name="Cannavan F."/>
            <person name="Cardozo J."/>
            <person name="Chambergo F."/>
            <person name="Ciapina L.P."/>
            <person name="Cicarelli R.M.B."/>
            <person name="Coutinho L.L."/>
            <person name="Cursino-Santos J.R."/>
            <person name="El-Dorry H."/>
            <person name="Faria J.B."/>
            <person name="Ferreira A.J.S."/>
            <person name="Ferreira R.C.C."/>
            <person name="Ferro M.I.T."/>
            <person name="Formighieri E.F."/>
            <person name="Franco M.C."/>
            <person name="Greggio C.C."/>
            <person name="Gruber A."/>
            <person name="Katsuyama A.M."/>
            <person name="Kishi L.T."/>
            <person name="Leite R.P."/>
            <person name="Lemos E.G.M."/>
            <person name="Lemos M.V.F."/>
            <person name="Locali E.C."/>
            <person name="Machado M.A."/>
            <person name="Madeira A.M.B.N."/>
            <person name="Martinez-Rossi N.M."/>
            <person name="Martins E.C."/>
            <person name="Meidanis J."/>
            <person name="Menck C.F.M."/>
            <person name="Miyaki C.Y."/>
            <person name="Moon D.H."/>
            <person name="Moreira L.M."/>
            <person name="Novo M.T.M."/>
            <person name="Okura V.K."/>
            <person name="Oliveira M.C."/>
            <person name="Oliveira V.R."/>
            <person name="Pereira H.A."/>
            <person name="Rossi A."/>
            <person name="Sena J.A.D."/>
            <person name="Silva C."/>
            <person name="de Souza R.F."/>
            <person name="Spinola L.A.F."/>
            <person name="Takita M.A."/>
            <person name="Tamura R.E."/>
            <person name="Teixeira E.C."/>
            <person name="Tezza R.I.D."/>
            <person name="Trindade dos Santos M."/>
            <person name="Truffi D."/>
            <person name="Tsai S.M."/>
            <person name="White F.F."/>
            <person name="Setubal J.C."/>
            <person name="Kitajima J.P."/>
        </authorList>
    </citation>
    <scope>NUCLEOTIDE SEQUENCE [LARGE SCALE GENOMIC DNA]</scope>
    <source>
        <strain>ATCC 33913 / DSM 3586 / NCPPB 528 / LMG 568 / P 25</strain>
    </source>
</reference>
<sequence>MTTMQLDSDGRLRHLLTLEGLPRATLLQLLDRAGQIRDAAVGRVGKRSVLAGTAVCTLFFEPSTRTRSSFHLAAQRLGADVLNFDASTSSTRKGETARDTLKNLEAMGVRGFVVRHPEDGAVERLAEAAGEGTALINAGDGRSAHPTQGLLDMLTLRQAKGTDFSKLKVVIVGDVKHSRVARSDLHALRTLGAGEIRVCGPASLLPDDDMLDGCVVGEDFDAMLEGADALMMLRLQRERMEEGLVPSLEQYHADYGLTRERLARAGRDAAVLHPGPINRGVEITDEVADGAQSCVLRQVANGVAVRMAVLETLLG</sequence>
<protein>
    <recommendedName>
        <fullName evidence="1">Aspartate carbamoyltransferase catalytic subunit</fullName>
        <ecNumber evidence="1">2.1.3.2</ecNumber>
    </recommendedName>
    <alternativeName>
        <fullName evidence="1">Aspartate transcarbamylase</fullName>
        <shortName evidence="1">ATCase</shortName>
    </alternativeName>
</protein>
<keyword id="KW-0665">Pyrimidine biosynthesis</keyword>
<keyword id="KW-1185">Reference proteome</keyword>
<keyword id="KW-0808">Transferase</keyword>
<comment type="function">
    <text evidence="1">Catalyzes the condensation of carbamoyl phosphate and aspartate to form carbamoyl aspartate and inorganic phosphate, the committed step in the de novo pyrimidine nucleotide biosynthesis pathway.</text>
</comment>
<comment type="catalytic activity">
    <reaction evidence="1">
        <text>carbamoyl phosphate + L-aspartate = N-carbamoyl-L-aspartate + phosphate + H(+)</text>
        <dbReference type="Rhea" id="RHEA:20013"/>
        <dbReference type="ChEBI" id="CHEBI:15378"/>
        <dbReference type="ChEBI" id="CHEBI:29991"/>
        <dbReference type="ChEBI" id="CHEBI:32814"/>
        <dbReference type="ChEBI" id="CHEBI:43474"/>
        <dbReference type="ChEBI" id="CHEBI:58228"/>
        <dbReference type="EC" id="2.1.3.2"/>
    </reaction>
</comment>
<comment type="pathway">
    <text evidence="1">Pyrimidine metabolism; UMP biosynthesis via de novo pathway; (S)-dihydroorotate from bicarbonate: step 2/3.</text>
</comment>
<comment type="subunit">
    <text evidence="1">Heterododecamer (2C3:3R2) of six catalytic PyrB chains organized as two trimers (C3), and six regulatory PyrI chains organized as three dimers (R2).</text>
</comment>
<comment type="similarity">
    <text evidence="1">Belongs to the aspartate/ornithine carbamoyltransferase superfamily. ATCase family.</text>
</comment>
<feature type="chain" id="PRO_0000113233" description="Aspartate carbamoyltransferase catalytic subunit">
    <location>
        <begin position="1"/>
        <end position="315"/>
    </location>
</feature>
<feature type="binding site" evidence="1">
    <location>
        <position position="65"/>
    </location>
    <ligand>
        <name>carbamoyl phosphate</name>
        <dbReference type="ChEBI" id="CHEBI:58228"/>
    </ligand>
</feature>
<feature type="binding site" evidence="1">
    <location>
        <position position="66"/>
    </location>
    <ligand>
        <name>carbamoyl phosphate</name>
        <dbReference type="ChEBI" id="CHEBI:58228"/>
    </ligand>
</feature>
<feature type="binding site" evidence="1">
    <location>
        <position position="93"/>
    </location>
    <ligand>
        <name>L-aspartate</name>
        <dbReference type="ChEBI" id="CHEBI:29991"/>
    </ligand>
</feature>
<feature type="binding site" evidence="1">
    <location>
        <position position="115"/>
    </location>
    <ligand>
        <name>carbamoyl phosphate</name>
        <dbReference type="ChEBI" id="CHEBI:58228"/>
    </ligand>
</feature>
<feature type="binding site" evidence="1">
    <location>
        <position position="145"/>
    </location>
    <ligand>
        <name>carbamoyl phosphate</name>
        <dbReference type="ChEBI" id="CHEBI:58228"/>
    </ligand>
</feature>
<feature type="binding site" evidence="1">
    <location>
        <position position="148"/>
    </location>
    <ligand>
        <name>carbamoyl phosphate</name>
        <dbReference type="ChEBI" id="CHEBI:58228"/>
    </ligand>
</feature>
<feature type="binding site" evidence="1">
    <location>
        <position position="179"/>
    </location>
    <ligand>
        <name>L-aspartate</name>
        <dbReference type="ChEBI" id="CHEBI:29991"/>
    </ligand>
</feature>
<feature type="binding site" evidence="1">
    <location>
        <position position="234"/>
    </location>
    <ligand>
        <name>L-aspartate</name>
        <dbReference type="ChEBI" id="CHEBI:29991"/>
    </ligand>
</feature>
<feature type="binding site" evidence="1">
    <location>
        <position position="275"/>
    </location>
    <ligand>
        <name>carbamoyl phosphate</name>
        <dbReference type="ChEBI" id="CHEBI:58228"/>
    </ligand>
</feature>
<feature type="binding site" evidence="1">
    <location>
        <position position="276"/>
    </location>
    <ligand>
        <name>carbamoyl phosphate</name>
        <dbReference type="ChEBI" id="CHEBI:58228"/>
    </ligand>
</feature>
<organism>
    <name type="scientific">Xanthomonas campestris pv. campestris (strain ATCC 33913 / DSM 3586 / NCPPB 528 / LMG 568 / P 25)</name>
    <dbReference type="NCBI Taxonomy" id="190485"/>
    <lineage>
        <taxon>Bacteria</taxon>
        <taxon>Pseudomonadati</taxon>
        <taxon>Pseudomonadota</taxon>
        <taxon>Gammaproteobacteria</taxon>
        <taxon>Lysobacterales</taxon>
        <taxon>Lysobacteraceae</taxon>
        <taxon>Xanthomonas</taxon>
    </lineage>
</organism>